<evidence type="ECO:0000255" key="1">
    <source>
        <dbReference type="HAMAP-Rule" id="MF_01897"/>
    </source>
</evidence>
<evidence type="ECO:0000255" key="2">
    <source>
        <dbReference type="PROSITE-ProRule" id="PRU01384"/>
    </source>
</evidence>
<evidence type="ECO:0000269" key="3">
    <source>
    </source>
</evidence>
<evidence type="ECO:0000269" key="4">
    <source>
    </source>
</evidence>
<evidence type="ECO:0000303" key="5">
    <source>
    </source>
</evidence>
<evidence type="ECO:0000305" key="6"/>
<evidence type="ECO:0007829" key="7">
    <source>
        <dbReference type="PDB" id="1SUU"/>
    </source>
</evidence>
<feature type="chain" id="PRO_0000145222" description="DNA gyrase subunit A">
    <location>
        <begin position="1"/>
        <end position="810"/>
    </location>
</feature>
<feature type="domain" description="Topo IIA-type catalytic" evidence="2">
    <location>
        <begin position="36"/>
        <end position="502"/>
    </location>
</feature>
<feature type="region of interest" description="C-terminal domain" evidence="5">
    <location>
        <begin position="499"/>
        <end position="810"/>
    </location>
</feature>
<feature type="short sequence motif" description="GyrA-box" evidence="1">
    <location>
        <begin position="529"/>
        <end position="535"/>
    </location>
</feature>
<feature type="active site" description="O-(5'-phospho-DNA)-tyrosine intermediate" evidence="1">
    <location>
        <position position="124"/>
    </location>
</feature>
<feature type="sequence conflict" description="In Ref. 2; CAA78157." evidence="6" ref="2">
    <original>IREE</original>
    <variation>YKRR</variation>
    <location>
        <begin position="469"/>
        <end position="472"/>
    </location>
</feature>
<feature type="sequence conflict" description="In Ref. 2; CAA78157." evidence="6" ref="2">
    <original>F</original>
    <variation>Y</variation>
    <location>
        <position position="539"/>
    </location>
</feature>
<feature type="strand" evidence="7">
    <location>
        <begin position="507"/>
        <end position="513"/>
    </location>
</feature>
<feature type="strand" evidence="7">
    <location>
        <begin position="517"/>
        <end position="522"/>
    </location>
</feature>
<feature type="helix" evidence="7">
    <location>
        <begin position="523"/>
        <end position="525"/>
    </location>
</feature>
<feature type="strand" evidence="7">
    <location>
        <begin position="547"/>
        <end position="554"/>
    </location>
</feature>
<feature type="strand" evidence="7">
    <location>
        <begin position="558"/>
        <end position="563"/>
    </location>
</feature>
<feature type="strand" evidence="7">
    <location>
        <begin position="566"/>
        <end position="572"/>
    </location>
</feature>
<feature type="helix" evidence="7">
    <location>
        <begin position="573"/>
        <end position="575"/>
    </location>
</feature>
<feature type="helix" evidence="7">
    <location>
        <begin position="588"/>
        <end position="590"/>
    </location>
</feature>
<feature type="strand" evidence="7">
    <location>
        <begin position="600"/>
        <end position="607"/>
    </location>
</feature>
<feature type="strand" evidence="7">
    <location>
        <begin position="614"/>
        <end position="619"/>
    </location>
</feature>
<feature type="strand" evidence="7">
    <location>
        <begin position="622"/>
        <end position="628"/>
    </location>
</feature>
<feature type="helix" evidence="7">
    <location>
        <begin position="629"/>
        <end position="632"/>
    </location>
</feature>
<feature type="strand" evidence="7">
    <location>
        <begin position="651"/>
        <end position="657"/>
    </location>
</feature>
<feature type="strand" evidence="7">
    <location>
        <begin position="662"/>
        <end position="667"/>
    </location>
</feature>
<feature type="strand" evidence="7">
    <location>
        <begin position="670"/>
        <end position="676"/>
    </location>
</feature>
<feature type="helix" evidence="7">
    <location>
        <begin position="677"/>
        <end position="679"/>
    </location>
</feature>
<feature type="strand" evidence="7">
    <location>
        <begin position="701"/>
        <end position="706"/>
    </location>
</feature>
<feature type="strand" evidence="7">
    <location>
        <begin position="711"/>
        <end position="717"/>
    </location>
</feature>
<feature type="strand" evidence="7">
    <location>
        <begin position="720"/>
        <end position="726"/>
    </location>
</feature>
<feature type="helix" evidence="7">
    <location>
        <begin position="727"/>
        <end position="729"/>
    </location>
</feature>
<feature type="turn" evidence="7">
    <location>
        <begin position="748"/>
        <end position="750"/>
    </location>
</feature>
<feature type="strand" evidence="7">
    <location>
        <begin position="752"/>
        <end position="759"/>
    </location>
</feature>
<feature type="strand" evidence="7">
    <location>
        <begin position="764"/>
        <end position="769"/>
    </location>
</feature>
<feature type="strand" evidence="7">
    <location>
        <begin position="773"/>
        <end position="778"/>
    </location>
</feature>
<feature type="helix" evidence="7">
    <location>
        <begin position="779"/>
        <end position="781"/>
    </location>
</feature>
<feature type="strand" evidence="7">
    <location>
        <begin position="802"/>
        <end position="807"/>
    </location>
</feature>
<protein>
    <recommendedName>
        <fullName evidence="1">DNA gyrase subunit A</fullName>
        <ecNumber evidence="1">5.6.2.2</ecNumber>
    </recommendedName>
</protein>
<proteinExistence type="evidence at protein level"/>
<reference key="1">
    <citation type="journal article" date="1997" name="Nature">
        <title>Genomic sequence of a Lyme disease spirochaete, Borrelia burgdorferi.</title>
        <authorList>
            <person name="Fraser C.M."/>
            <person name="Casjens S."/>
            <person name="Huang W.M."/>
            <person name="Sutton G.G."/>
            <person name="Clayton R.A."/>
            <person name="Lathigra R."/>
            <person name="White O."/>
            <person name="Ketchum K.A."/>
            <person name="Dodson R.J."/>
            <person name="Hickey E.K."/>
            <person name="Gwinn M.L."/>
            <person name="Dougherty B.A."/>
            <person name="Tomb J.-F."/>
            <person name="Fleischmann R.D."/>
            <person name="Richardson D.L."/>
            <person name="Peterson J.D."/>
            <person name="Kerlavage A.R."/>
            <person name="Quackenbush J."/>
            <person name="Salzberg S.L."/>
            <person name="Hanson M."/>
            <person name="van Vugt R."/>
            <person name="Palmer N."/>
            <person name="Adams M.D."/>
            <person name="Gocayne J.D."/>
            <person name="Weidman J.F."/>
            <person name="Utterback T.R."/>
            <person name="Watthey L."/>
            <person name="McDonald L.A."/>
            <person name="Artiach P."/>
            <person name="Bowman C."/>
            <person name="Garland S.A."/>
            <person name="Fujii C."/>
            <person name="Cotton M.D."/>
            <person name="Horst K."/>
            <person name="Roberts K.M."/>
            <person name="Hatch B."/>
            <person name="Smith H.O."/>
            <person name="Venter J.C."/>
        </authorList>
    </citation>
    <scope>NUCLEOTIDE SEQUENCE [LARGE SCALE GENOMIC DNA]</scope>
    <source>
        <strain>ATCC 35210 / DSM 4680 / CIP 102532 / B31</strain>
    </source>
</reference>
<reference key="2">
    <citation type="journal article" date="1992" name="FEMS Microbiol. Lett.">
        <title>Mapping of genes on the linear chromosome of the bacterium Borrelia burgdorferi: possible locations for its origin of replication.</title>
        <authorList>
            <person name="Old I.G."/>
            <person name="Macdougall J.H."/>
            <person name="Saint-Girons I."/>
            <person name="Davidson B.E."/>
        </authorList>
    </citation>
    <scope>NUCLEOTIDE SEQUENCE [GENOMIC DNA] OF 450-545</scope>
    <source>
        <strain>212</strain>
    </source>
</reference>
<reference key="3">
    <citation type="journal article" date="2005" name="J. Biol. Chem.">
        <title>A superhelical spiral in the Escherichia coli DNA gyrase A C-terminal domain imparts unidirectional supercoiling bias.</title>
        <authorList>
            <person name="Ruthenburg A.J."/>
            <person name="Graybosch D.M."/>
            <person name="Huetsch J.C."/>
            <person name="Verdine G.L."/>
        </authorList>
    </citation>
    <scope>FUNCTION</scope>
    <scope>DOMAIN</scope>
    <source>
        <strain>ATCC 35210 / DSM 4680 / CIP 102532 / B31</strain>
    </source>
</reference>
<reference key="4">
    <citation type="journal article" date="2004" name="Proc. Natl. Acad. Sci. U.S.A.">
        <title>The C-terminal domain of DNA gyrase A adopts a DNA-bending beta-pinwheel fold.</title>
        <authorList>
            <person name="Corbett K.D."/>
            <person name="Shultzaberger R.K."/>
            <person name="Berger J.M."/>
        </authorList>
    </citation>
    <scope>X-RAY CRYSTALLOGRAPHY (1.75 ANGSTROMS) OF 499-810</scope>
    <scope>DOMAIN</scope>
    <scope>DNA-BINDING</scope>
    <source>
        <strain>ATCC 35210 / DSM 4680 / CIP 102532 / B31</strain>
    </source>
</reference>
<accession>O51396</accession>
<accession>Q44931</accession>
<sequence>MAVGENKEQILNVRIEDEIKTSYLNYAMSVIVSRALPDVRDGLKPVHRRILYSMYEMGLRSDKAFKKAGRIVGDVLGKYHPHGDQSIYDALVRLAQDFSLRYPVIRGQGNFGSIDGDPPAAMRYTEAKMEKITEYIVKDIDKETVNFKSNYDDSLSEPEIMPSSFPFLLVNGSSGIAVGMATNMAPHNLREICDAIVYMLDNENASIFDLLKIVKGPDFPTFGEIVYNDNLIKAYKTGKGSVVIRARYHIEERAEDRNAIIVTEIPYTVNKSALLMKVALLAKEEKLEGLLDIRDESDREGIRIVLEVKRGFDPHVIMNLLYEYTEFKKHFSINNLALVNGIPKQLNLEELLFEFIEHRKNIIERRIEFDLRKAKEKAHVLEGLNIALNNIDEVIKIIKSSKLAKDARERLVSNFGLSEIQANSVLDMRLQKLTALEIFKLEEELNILLSLIKDYEDILLNPVRIINIIREETINLGLKFGDERRTKIIYDEEVLKTSMSDLMQKENIVVMLTKKGFLKRLSQNEYKLQGTGGKGLSSFDLNDGDEIVIALCVNTHDYLFMISNEGKLYLINAYEIKDSSRASKGQNISELINLGDQEEILTIKNSKDLTDDAYLLLTTASGKIARFESTDFKAVKSRGVIVIKLNDKDFVTSAEIVFKDEKVICLSKKGSAFIFNSRDVRLTNRGTQGVCGMKLKEGDLFVKVLSVKENPYLLIVSENGYGKRLNMSKISELKRGATGYTSYKKSDKKAGSVVDAIAVSEDDEILLVSKRSKALRTVAGKVSEQGKDARGIQVLFLDNDSLVSVSKFIK</sequence>
<comment type="function">
    <text evidence="1 4">A type II topoisomerase that negatively supercoils closed circular double-stranded (ds) DNA in an ATP-dependent manner to modulate DNA topology and maintain chromosomes in an underwound state (PubMed:15897198). Negative supercoiling favors strand separation, and DNA replication, transcription, recombination and repair, all of which involve strand separation. Also able to catalyze the interconversion of other topological isomers of dsDNA rings, including catenanes and knotted rings. Type II topoisomerases break and join 2 DNA strands simultaneously in an ATP-dependent manner.</text>
</comment>
<comment type="catalytic activity">
    <reaction evidence="1">
        <text>ATP-dependent breakage, passage and rejoining of double-stranded DNA.</text>
        <dbReference type="EC" id="5.6.2.2"/>
    </reaction>
</comment>
<comment type="subunit">
    <text evidence="1">Heterotetramer, composed of two GyrA and two GyrB chains. In the heterotetramer, GyrA contains the active site tyrosine that forms a transient covalent intermediate with DNA, while GyrB binds cofactors and catalyzes ATP hydrolysis.</text>
</comment>
<comment type="subcellular location">
    <subcellularLocation>
        <location evidence="1">Cytoplasm</location>
    </subcellularLocation>
</comment>
<comment type="domain">
    <text evidence="3 4">The C-terminal domain (CTD, residues 499-810) contains 6 tandemly repeated subdomains known as blades, each of which is composed of a 4-stranded antiparallel beta-sheet. The blades form a flat, toroidal beta-pinwheel fold, to which DNA probably binds, inducing mild positive superhelicity (about 0.3 links/protein) (PubMed:15123801, PubMed:15897198).</text>
</comment>
<comment type="miscellaneous">
    <text evidence="1">Few gyrases are as efficient as E.coli at forming negative supercoils. Not all organisms have 2 type II topoisomerases; in organisms with a single type II topoisomerase this enzyme also has to decatenate newly replicated chromosomes.</text>
</comment>
<comment type="similarity">
    <text evidence="1">Belongs to the type II topoisomerase GyrA/ParC subunit family.</text>
</comment>
<name>GYRA_BORBU</name>
<gene>
    <name evidence="1" type="primary">gyrA</name>
    <name type="ordered locus">BB_0435</name>
</gene>
<dbReference type="EC" id="5.6.2.2" evidence="1"/>
<dbReference type="EMBL" id="AE000783">
    <property type="protein sequence ID" value="AAC66803.1"/>
    <property type="molecule type" value="Genomic_DNA"/>
</dbReference>
<dbReference type="EMBL" id="Z12165">
    <property type="protein sequence ID" value="CAA78157.1"/>
    <property type="molecule type" value="Genomic_DNA"/>
</dbReference>
<dbReference type="PIR" id="B70154">
    <property type="entry name" value="B70154"/>
</dbReference>
<dbReference type="RefSeq" id="NP_212569.1">
    <property type="nucleotide sequence ID" value="NC_001318.1"/>
</dbReference>
<dbReference type="RefSeq" id="WP_002656784.1">
    <property type="nucleotide sequence ID" value="NC_001318.1"/>
</dbReference>
<dbReference type="PDB" id="1SUU">
    <property type="method" value="X-ray"/>
    <property type="resolution" value="1.75 A"/>
    <property type="chains" value="A=499-810"/>
</dbReference>
<dbReference type="PDBsum" id="1SUU"/>
<dbReference type="SMR" id="O51396"/>
<dbReference type="STRING" id="224326.BB_0435"/>
<dbReference type="PaxDb" id="224326-BB_0435"/>
<dbReference type="EnsemblBacteria" id="AAC66803">
    <property type="protein sequence ID" value="AAC66803"/>
    <property type="gene ID" value="BB_0435"/>
</dbReference>
<dbReference type="GeneID" id="56567866"/>
<dbReference type="KEGG" id="bbu:BB_0435"/>
<dbReference type="PATRIC" id="fig|224326.49.peg.826"/>
<dbReference type="HOGENOM" id="CLU_002977_4_1_12"/>
<dbReference type="OrthoDB" id="9806486at2"/>
<dbReference type="EvolutionaryTrace" id="O51396"/>
<dbReference type="Proteomes" id="UP000001807">
    <property type="component" value="Chromosome"/>
</dbReference>
<dbReference type="GO" id="GO:0005694">
    <property type="term" value="C:chromosome"/>
    <property type="evidence" value="ECO:0007669"/>
    <property type="project" value="InterPro"/>
</dbReference>
<dbReference type="GO" id="GO:0005737">
    <property type="term" value="C:cytoplasm"/>
    <property type="evidence" value="ECO:0007669"/>
    <property type="project" value="UniProtKB-SubCell"/>
</dbReference>
<dbReference type="GO" id="GO:0009330">
    <property type="term" value="C:DNA topoisomerase type II (double strand cut, ATP-hydrolyzing) complex"/>
    <property type="evidence" value="ECO:0007669"/>
    <property type="project" value="TreeGrafter"/>
</dbReference>
<dbReference type="GO" id="GO:0005524">
    <property type="term" value="F:ATP binding"/>
    <property type="evidence" value="ECO:0007669"/>
    <property type="project" value="UniProtKB-UniRule"/>
</dbReference>
<dbReference type="GO" id="GO:0003677">
    <property type="term" value="F:DNA binding"/>
    <property type="evidence" value="ECO:0007669"/>
    <property type="project" value="UniProtKB-UniRule"/>
</dbReference>
<dbReference type="GO" id="GO:0034335">
    <property type="term" value="F:DNA negative supercoiling activity"/>
    <property type="evidence" value="ECO:0007669"/>
    <property type="project" value="UniProtKB-ARBA"/>
</dbReference>
<dbReference type="GO" id="GO:0006265">
    <property type="term" value="P:DNA topological change"/>
    <property type="evidence" value="ECO:0007669"/>
    <property type="project" value="UniProtKB-UniRule"/>
</dbReference>
<dbReference type="GO" id="GO:0006261">
    <property type="term" value="P:DNA-templated DNA replication"/>
    <property type="evidence" value="ECO:0007669"/>
    <property type="project" value="UniProtKB-UniRule"/>
</dbReference>
<dbReference type="GO" id="GO:0046677">
    <property type="term" value="P:response to antibiotic"/>
    <property type="evidence" value="ECO:0007669"/>
    <property type="project" value="UniProtKB-KW"/>
</dbReference>
<dbReference type="CDD" id="cd00187">
    <property type="entry name" value="TOP4c"/>
    <property type="match status" value="1"/>
</dbReference>
<dbReference type="FunFam" id="1.10.268.10:FF:000001">
    <property type="entry name" value="DNA gyrase subunit A"/>
    <property type="match status" value="1"/>
</dbReference>
<dbReference type="FunFam" id="3.30.1360.40:FF:000002">
    <property type="entry name" value="DNA gyrase subunit A"/>
    <property type="match status" value="1"/>
</dbReference>
<dbReference type="FunFam" id="3.90.199.10:FF:000001">
    <property type="entry name" value="DNA gyrase subunit A"/>
    <property type="match status" value="1"/>
</dbReference>
<dbReference type="Gene3D" id="3.30.1360.40">
    <property type="match status" value="1"/>
</dbReference>
<dbReference type="Gene3D" id="2.120.10.90">
    <property type="entry name" value="DNA gyrase/topoisomerase IV, subunit A, C-terminal"/>
    <property type="match status" value="1"/>
</dbReference>
<dbReference type="Gene3D" id="3.90.199.10">
    <property type="entry name" value="Topoisomerase II, domain 5"/>
    <property type="match status" value="1"/>
</dbReference>
<dbReference type="Gene3D" id="1.10.268.10">
    <property type="entry name" value="Topoisomerase, domain 3"/>
    <property type="match status" value="1"/>
</dbReference>
<dbReference type="HAMAP" id="MF_01897">
    <property type="entry name" value="GyrA"/>
    <property type="match status" value="1"/>
</dbReference>
<dbReference type="InterPro" id="IPR005743">
    <property type="entry name" value="GyrA"/>
</dbReference>
<dbReference type="InterPro" id="IPR006691">
    <property type="entry name" value="GyrA/parC_rep"/>
</dbReference>
<dbReference type="InterPro" id="IPR035516">
    <property type="entry name" value="Gyrase/topoIV_suA_C"/>
</dbReference>
<dbReference type="InterPro" id="IPR013760">
    <property type="entry name" value="Topo_IIA-like_dom_sf"/>
</dbReference>
<dbReference type="InterPro" id="IPR013758">
    <property type="entry name" value="Topo_IIA_A/C_ab"/>
</dbReference>
<dbReference type="InterPro" id="IPR013757">
    <property type="entry name" value="Topo_IIA_A_a_sf"/>
</dbReference>
<dbReference type="InterPro" id="IPR002205">
    <property type="entry name" value="Topo_IIA_dom_A"/>
</dbReference>
<dbReference type="InterPro" id="IPR050220">
    <property type="entry name" value="Type_II_DNA_Topoisomerases"/>
</dbReference>
<dbReference type="NCBIfam" id="TIGR01063">
    <property type="entry name" value="gyrA"/>
    <property type="match status" value="1"/>
</dbReference>
<dbReference type="NCBIfam" id="NF004043">
    <property type="entry name" value="PRK05560.1"/>
    <property type="match status" value="1"/>
</dbReference>
<dbReference type="NCBIfam" id="NF004044">
    <property type="entry name" value="PRK05561.1"/>
    <property type="match status" value="1"/>
</dbReference>
<dbReference type="PANTHER" id="PTHR43493:SF5">
    <property type="entry name" value="DNA GYRASE SUBUNIT A, CHLOROPLASTIC_MITOCHONDRIAL"/>
    <property type="match status" value="1"/>
</dbReference>
<dbReference type="PANTHER" id="PTHR43493">
    <property type="entry name" value="DNA GYRASE/TOPOISOMERASE SUBUNIT A"/>
    <property type="match status" value="1"/>
</dbReference>
<dbReference type="Pfam" id="PF03989">
    <property type="entry name" value="DNA_gyraseA_C"/>
    <property type="match status" value="6"/>
</dbReference>
<dbReference type="Pfam" id="PF00521">
    <property type="entry name" value="DNA_topoisoIV"/>
    <property type="match status" value="1"/>
</dbReference>
<dbReference type="SMART" id="SM00434">
    <property type="entry name" value="TOP4c"/>
    <property type="match status" value="1"/>
</dbReference>
<dbReference type="SUPFAM" id="SSF101904">
    <property type="entry name" value="GyrA/ParC C-terminal domain-like"/>
    <property type="match status" value="1"/>
</dbReference>
<dbReference type="SUPFAM" id="SSF56719">
    <property type="entry name" value="Type II DNA topoisomerase"/>
    <property type="match status" value="1"/>
</dbReference>
<dbReference type="PROSITE" id="PS52040">
    <property type="entry name" value="TOPO_IIA"/>
    <property type="match status" value="1"/>
</dbReference>
<organism>
    <name type="scientific">Borreliella burgdorferi (strain ATCC 35210 / DSM 4680 / CIP 102532 / B31)</name>
    <name type="common">Borrelia burgdorferi</name>
    <dbReference type="NCBI Taxonomy" id="224326"/>
    <lineage>
        <taxon>Bacteria</taxon>
        <taxon>Pseudomonadati</taxon>
        <taxon>Spirochaetota</taxon>
        <taxon>Spirochaetia</taxon>
        <taxon>Spirochaetales</taxon>
        <taxon>Borreliaceae</taxon>
        <taxon>Borreliella</taxon>
    </lineage>
</organism>
<keyword id="KW-0002">3D-structure</keyword>
<keyword id="KW-0046">Antibiotic resistance</keyword>
<keyword id="KW-0067">ATP-binding</keyword>
<keyword id="KW-0963">Cytoplasm</keyword>
<keyword id="KW-0238">DNA-binding</keyword>
<keyword id="KW-0413">Isomerase</keyword>
<keyword id="KW-0547">Nucleotide-binding</keyword>
<keyword id="KW-1185">Reference proteome</keyword>
<keyword id="KW-0799">Topoisomerase</keyword>